<feature type="chain" id="PRO_0000341888" description="2-succinyl-5-enolpyruvyl-6-hydroxy-3-cyclohexene-1-carboxylate synthase">
    <location>
        <begin position="1"/>
        <end position="564"/>
    </location>
</feature>
<proteinExistence type="inferred from homology"/>
<organism>
    <name type="scientific">Vibrio vulnificus (strain YJ016)</name>
    <dbReference type="NCBI Taxonomy" id="196600"/>
    <lineage>
        <taxon>Bacteria</taxon>
        <taxon>Pseudomonadati</taxon>
        <taxon>Pseudomonadota</taxon>
        <taxon>Gammaproteobacteria</taxon>
        <taxon>Vibrionales</taxon>
        <taxon>Vibrionaceae</taxon>
        <taxon>Vibrio</taxon>
    </lineage>
</organism>
<comment type="function">
    <text evidence="1">Catalyzes the thiamine diphosphate-dependent decarboxylation of 2-oxoglutarate and the subsequent addition of the resulting succinic semialdehyde-thiamine pyrophosphate anion to isochorismate to yield 2-succinyl-5-enolpyruvyl-6-hydroxy-3-cyclohexene-1-carboxylate (SEPHCHC).</text>
</comment>
<comment type="catalytic activity">
    <reaction evidence="1">
        <text>isochorismate + 2-oxoglutarate + H(+) = 5-enolpyruvoyl-6-hydroxy-2-succinyl-cyclohex-3-ene-1-carboxylate + CO2</text>
        <dbReference type="Rhea" id="RHEA:25593"/>
        <dbReference type="ChEBI" id="CHEBI:15378"/>
        <dbReference type="ChEBI" id="CHEBI:16526"/>
        <dbReference type="ChEBI" id="CHEBI:16810"/>
        <dbReference type="ChEBI" id="CHEBI:29780"/>
        <dbReference type="ChEBI" id="CHEBI:58818"/>
        <dbReference type="EC" id="2.2.1.9"/>
    </reaction>
</comment>
<comment type="cofactor">
    <cofactor evidence="1">
        <name>Mg(2+)</name>
        <dbReference type="ChEBI" id="CHEBI:18420"/>
    </cofactor>
    <cofactor evidence="1">
        <name>Mn(2+)</name>
        <dbReference type="ChEBI" id="CHEBI:29035"/>
    </cofactor>
</comment>
<comment type="cofactor">
    <cofactor evidence="1">
        <name>thiamine diphosphate</name>
        <dbReference type="ChEBI" id="CHEBI:58937"/>
    </cofactor>
    <text evidence="1">Binds 1 thiamine pyrophosphate per subunit.</text>
</comment>
<comment type="pathway">
    <text evidence="1">Quinol/quinone metabolism; 1,4-dihydroxy-2-naphthoate biosynthesis; 1,4-dihydroxy-2-naphthoate from chorismate: step 2/7.</text>
</comment>
<comment type="pathway">
    <text evidence="1">Quinol/quinone metabolism; menaquinone biosynthesis.</text>
</comment>
<comment type="subunit">
    <text evidence="1">Homodimer.</text>
</comment>
<comment type="similarity">
    <text evidence="1">Belongs to the TPP enzyme family. MenD subfamily.</text>
</comment>
<name>MEND_VIBVY</name>
<sequence length="564" mass="61825">MNHDQAVLNRIWCETLFEELYRFGVRDVCVAPGSRSTPLALEANAHTSLKLHTHFDERGLGFLALGLAKASQRPVAVVVTSGTAVANLLPAVAEAGLTGEKLVLLTADRPIELVGCGANQAIAQQGIFSNHVCASLNLPSPNTQTSLNWLLTSVDQVLHQQAVSGHAVHINCPFPEPLYSNAPKSIYQSYIDTVAVWRAEGGIYSNKQMPLPMPTSIAEIEQRKAVVVIGSVTLQEAKQAHQFAAQMGWPVLCDPQSGTTSDWSGFDIWLQNPAARAQLSQCDLIIQFGRRLVSKRLHQWLEQQVQAGCDYWYVSPDFERDNQSHLPQQHFVCSIAAWLNVVTNREVQPVAWANELPRFSAEVNKQAREIAQSSLCEMMIALHLSSLVGSADLFLGNSLFVRMVDMVGQLHGVETFTNRGASGIDGLFATASGVQRARSNPMLLMIGDTSALYDLNSLALYSHQETPVVIVVTNNDGGAIFDLLPVPPQQKQALYQMPHGYRFEFAAKQFGLDYVRPTSMTELTERIVGHFAHGCGALLVEVNTPPNQASQHIKQLADHVRALV</sequence>
<dbReference type="EC" id="2.2.1.9" evidence="1"/>
<dbReference type="EMBL" id="BA000037">
    <property type="protein sequence ID" value="BAC93880.1"/>
    <property type="molecule type" value="Genomic_DNA"/>
</dbReference>
<dbReference type="RefSeq" id="WP_011149849.1">
    <property type="nucleotide sequence ID" value="NC_005139.1"/>
</dbReference>
<dbReference type="SMR" id="Q7MMF6"/>
<dbReference type="STRING" id="672.VV93_v1c10370"/>
<dbReference type="KEGG" id="vvy:VV1116"/>
<dbReference type="PATRIC" id="fig|196600.6.peg.1112"/>
<dbReference type="eggNOG" id="COG1165">
    <property type="taxonomic scope" value="Bacteria"/>
</dbReference>
<dbReference type="HOGENOM" id="CLU_006051_3_0_6"/>
<dbReference type="UniPathway" id="UPA00079"/>
<dbReference type="UniPathway" id="UPA01057">
    <property type="reaction ID" value="UER00164"/>
</dbReference>
<dbReference type="Proteomes" id="UP000002675">
    <property type="component" value="Chromosome I"/>
</dbReference>
<dbReference type="GO" id="GO:0070204">
    <property type="term" value="F:2-succinyl-5-enolpyruvyl-6-hydroxy-3-cyclohexene-1-carboxylic-acid synthase activity"/>
    <property type="evidence" value="ECO:0007669"/>
    <property type="project" value="UniProtKB-UniRule"/>
</dbReference>
<dbReference type="GO" id="GO:0000287">
    <property type="term" value="F:magnesium ion binding"/>
    <property type="evidence" value="ECO:0007669"/>
    <property type="project" value="UniProtKB-UniRule"/>
</dbReference>
<dbReference type="GO" id="GO:0030145">
    <property type="term" value="F:manganese ion binding"/>
    <property type="evidence" value="ECO:0007669"/>
    <property type="project" value="UniProtKB-UniRule"/>
</dbReference>
<dbReference type="GO" id="GO:0030976">
    <property type="term" value="F:thiamine pyrophosphate binding"/>
    <property type="evidence" value="ECO:0007669"/>
    <property type="project" value="UniProtKB-UniRule"/>
</dbReference>
<dbReference type="GO" id="GO:0009234">
    <property type="term" value="P:menaquinone biosynthetic process"/>
    <property type="evidence" value="ECO:0007669"/>
    <property type="project" value="UniProtKB-UniRule"/>
</dbReference>
<dbReference type="CDD" id="cd07037">
    <property type="entry name" value="TPP_PYR_MenD"/>
    <property type="match status" value="1"/>
</dbReference>
<dbReference type="CDD" id="cd02009">
    <property type="entry name" value="TPP_SHCHC_synthase"/>
    <property type="match status" value="1"/>
</dbReference>
<dbReference type="Gene3D" id="3.40.50.970">
    <property type="match status" value="2"/>
</dbReference>
<dbReference type="Gene3D" id="3.40.50.1220">
    <property type="entry name" value="TPP-binding domain"/>
    <property type="match status" value="1"/>
</dbReference>
<dbReference type="HAMAP" id="MF_01659">
    <property type="entry name" value="MenD"/>
    <property type="match status" value="1"/>
</dbReference>
<dbReference type="InterPro" id="IPR029035">
    <property type="entry name" value="DHS-like_NAD/FAD-binding_dom"/>
</dbReference>
<dbReference type="InterPro" id="IPR004433">
    <property type="entry name" value="MenaQ_synth_MenD"/>
</dbReference>
<dbReference type="InterPro" id="IPR032264">
    <property type="entry name" value="MenD_middle"/>
</dbReference>
<dbReference type="InterPro" id="IPR029061">
    <property type="entry name" value="THDP-binding"/>
</dbReference>
<dbReference type="InterPro" id="IPR012001">
    <property type="entry name" value="Thiamin_PyroP_enz_TPP-bd_dom"/>
</dbReference>
<dbReference type="InterPro" id="IPR011766">
    <property type="entry name" value="TPP_enzyme_TPP-bd"/>
</dbReference>
<dbReference type="NCBIfam" id="TIGR00173">
    <property type="entry name" value="menD"/>
    <property type="match status" value="1"/>
</dbReference>
<dbReference type="PANTHER" id="PTHR42916">
    <property type="entry name" value="2-SUCCINYL-5-ENOLPYRUVYL-6-HYDROXY-3-CYCLOHEXENE-1-CARBOXYLATE SYNTHASE"/>
    <property type="match status" value="1"/>
</dbReference>
<dbReference type="PANTHER" id="PTHR42916:SF1">
    <property type="entry name" value="PROTEIN PHYLLO, CHLOROPLASTIC"/>
    <property type="match status" value="1"/>
</dbReference>
<dbReference type="Pfam" id="PF02775">
    <property type="entry name" value="TPP_enzyme_C"/>
    <property type="match status" value="1"/>
</dbReference>
<dbReference type="Pfam" id="PF16582">
    <property type="entry name" value="TPP_enzyme_M_2"/>
    <property type="match status" value="1"/>
</dbReference>
<dbReference type="Pfam" id="PF02776">
    <property type="entry name" value="TPP_enzyme_N"/>
    <property type="match status" value="1"/>
</dbReference>
<dbReference type="PIRSF" id="PIRSF004983">
    <property type="entry name" value="MenD"/>
    <property type="match status" value="1"/>
</dbReference>
<dbReference type="SUPFAM" id="SSF52467">
    <property type="entry name" value="DHS-like NAD/FAD-binding domain"/>
    <property type="match status" value="1"/>
</dbReference>
<dbReference type="SUPFAM" id="SSF52518">
    <property type="entry name" value="Thiamin diphosphate-binding fold (THDP-binding)"/>
    <property type="match status" value="2"/>
</dbReference>
<accession>Q7MMF6</accession>
<evidence type="ECO:0000255" key="1">
    <source>
        <dbReference type="HAMAP-Rule" id="MF_01659"/>
    </source>
</evidence>
<gene>
    <name evidence="1" type="primary">menD</name>
    <name type="ordered locus">VV1116</name>
</gene>
<keyword id="KW-0460">Magnesium</keyword>
<keyword id="KW-0464">Manganese</keyword>
<keyword id="KW-0474">Menaquinone biosynthesis</keyword>
<keyword id="KW-0479">Metal-binding</keyword>
<keyword id="KW-0786">Thiamine pyrophosphate</keyword>
<keyword id="KW-0808">Transferase</keyword>
<protein>
    <recommendedName>
        <fullName evidence="1">2-succinyl-5-enolpyruvyl-6-hydroxy-3-cyclohexene-1-carboxylate synthase</fullName>
        <shortName evidence="1">SEPHCHC synthase</shortName>
        <ecNumber evidence="1">2.2.1.9</ecNumber>
    </recommendedName>
    <alternativeName>
        <fullName evidence="1">Menaquinone biosynthesis protein MenD</fullName>
    </alternativeName>
</protein>
<reference key="1">
    <citation type="journal article" date="2003" name="Genome Res.">
        <title>Comparative genome analysis of Vibrio vulnificus, a marine pathogen.</title>
        <authorList>
            <person name="Chen C.-Y."/>
            <person name="Wu K.-M."/>
            <person name="Chang Y.-C."/>
            <person name="Chang C.-H."/>
            <person name="Tsai H.-C."/>
            <person name="Liao T.-L."/>
            <person name="Liu Y.-M."/>
            <person name="Chen H.-J."/>
            <person name="Shen A.B.-T."/>
            <person name="Li J.-C."/>
            <person name="Su T.-L."/>
            <person name="Shao C.-P."/>
            <person name="Lee C.-T."/>
            <person name="Hor L.-I."/>
            <person name="Tsai S.-F."/>
        </authorList>
    </citation>
    <scope>NUCLEOTIDE SEQUENCE [LARGE SCALE GENOMIC DNA]</scope>
    <source>
        <strain>YJ016</strain>
    </source>
</reference>